<gene>
    <name type="primary">syf2</name>
    <name type="ORF">TGas131i06.1</name>
</gene>
<dbReference type="EMBL" id="AC151465">
    <property type="protein sequence ID" value="AAU12852.1"/>
    <property type="status" value="ALT_INIT"/>
    <property type="molecule type" value="Genomic_DNA"/>
</dbReference>
<dbReference type="EMBL" id="CR761644">
    <property type="protein sequence ID" value="CAJ83779.1"/>
    <property type="molecule type" value="mRNA"/>
</dbReference>
<dbReference type="EMBL" id="BC087564">
    <property type="protein sequence ID" value="AAH87564.1"/>
    <property type="molecule type" value="mRNA"/>
</dbReference>
<dbReference type="RefSeq" id="NP_001032340.1">
    <property type="nucleotide sequence ID" value="NM_001037263.1"/>
</dbReference>
<dbReference type="SMR" id="Q28G05"/>
<dbReference type="FunCoup" id="Q28G05">
    <property type="interactions" value="2365"/>
</dbReference>
<dbReference type="STRING" id="8364.ENSXETP00000047445"/>
<dbReference type="PaxDb" id="8364-ENSXETP00000049327"/>
<dbReference type="GeneID" id="496706"/>
<dbReference type="KEGG" id="xtr:496706"/>
<dbReference type="AGR" id="Xenbase:XB-GENE-920839"/>
<dbReference type="CTD" id="25949"/>
<dbReference type="Xenbase" id="XB-GENE-920839">
    <property type="gene designation" value="syf2"/>
</dbReference>
<dbReference type="eggNOG" id="KOG2609">
    <property type="taxonomic scope" value="Eukaryota"/>
</dbReference>
<dbReference type="InParanoid" id="Q28G05"/>
<dbReference type="OrthoDB" id="199717at2759"/>
<dbReference type="Reactome" id="R-XTR-72163">
    <property type="pathway name" value="mRNA Splicing - Major Pathway"/>
</dbReference>
<dbReference type="Proteomes" id="UP000008143">
    <property type="component" value="Chromosome 6"/>
</dbReference>
<dbReference type="Bgee" id="ENSXETG00000022797">
    <property type="expression patterns" value="Expressed in ovary and 15 other cell types or tissues"/>
</dbReference>
<dbReference type="GO" id="GO:0005634">
    <property type="term" value="C:nucleus"/>
    <property type="evidence" value="ECO:0000250"/>
    <property type="project" value="UniProtKB"/>
</dbReference>
<dbReference type="GO" id="GO:0071007">
    <property type="term" value="C:U2-type catalytic step 2 spliceosome"/>
    <property type="evidence" value="ECO:0000250"/>
    <property type="project" value="UniProtKB"/>
</dbReference>
<dbReference type="GO" id="GO:0000398">
    <property type="term" value="P:mRNA splicing, via spliceosome"/>
    <property type="evidence" value="ECO:0000250"/>
    <property type="project" value="UniProtKB"/>
</dbReference>
<dbReference type="InterPro" id="IPR013260">
    <property type="entry name" value="mRNA_splic_SYF2"/>
</dbReference>
<dbReference type="PANTHER" id="PTHR13264">
    <property type="entry name" value="GCIP-INTERACTING PROTEIN P29"/>
    <property type="match status" value="1"/>
</dbReference>
<dbReference type="PANTHER" id="PTHR13264:SF5">
    <property type="entry name" value="PRE-MRNA-SPLICING FACTOR SYF2"/>
    <property type="match status" value="1"/>
</dbReference>
<dbReference type="Pfam" id="PF08231">
    <property type="entry name" value="SYF2"/>
    <property type="match status" value="1"/>
</dbReference>
<sequence>MKSPSAAVTEDNETAGVSSKAESPPASTEDLAAQKREARLRKFRELHLKTNEARKLNHQEVVEEDKRQKLPSNWEARKARLEWELKEEEKKRECAANGVDYERAKLLEISAEDAERWERKKKRKNPDLGFSDYAAAQLRQYQRLTKQIKPDMEEYEMEKQKQGEMFYPTSESLYHGTHIPSQSGIDRMVTDLEKQIEKREKYSRRRAYNDDADIDYINERNAKFNKKAERFYGKYTAEIKQNLERGTAV</sequence>
<organism>
    <name type="scientific">Xenopus tropicalis</name>
    <name type="common">Western clawed frog</name>
    <name type="synonym">Silurana tropicalis</name>
    <dbReference type="NCBI Taxonomy" id="8364"/>
    <lineage>
        <taxon>Eukaryota</taxon>
        <taxon>Metazoa</taxon>
        <taxon>Chordata</taxon>
        <taxon>Craniata</taxon>
        <taxon>Vertebrata</taxon>
        <taxon>Euteleostomi</taxon>
        <taxon>Amphibia</taxon>
        <taxon>Batrachia</taxon>
        <taxon>Anura</taxon>
        <taxon>Pipoidea</taxon>
        <taxon>Pipidae</taxon>
        <taxon>Xenopodinae</taxon>
        <taxon>Xenopus</taxon>
        <taxon>Silurana</taxon>
    </lineage>
</organism>
<accession>Q28G05</accession>
<accession>Q5PPP9</accession>
<accession>Q688C6</accession>
<evidence type="ECO:0000250" key="1">
    <source>
        <dbReference type="UniProtKB" id="O95926"/>
    </source>
</evidence>
<evidence type="ECO:0000255" key="2"/>
<evidence type="ECO:0000256" key="3">
    <source>
        <dbReference type="SAM" id="MobiDB-lite"/>
    </source>
</evidence>
<evidence type="ECO:0000305" key="4"/>
<name>SYF2_XENTR</name>
<keyword id="KW-0175">Coiled coil</keyword>
<keyword id="KW-0507">mRNA processing</keyword>
<keyword id="KW-0508">mRNA splicing</keyword>
<keyword id="KW-0539">Nucleus</keyword>
<keyword id="KW-1185">Reference proteome</keyword>
<keyword id="KW-0747">Spliceosome</keyword>
<feature type="chain" id="PRO_0000250382" description="Pre-mRNA-splicing factor syf2">
    <location>
        <begin position="1"/>
        <end position="249"/>
    </location>
</feature>
<feature type="region of interest" description="Disordered" evidence="3">
    <location>
        <begin position="1"/>
        <end position="36"/>
    </location>
</feature>
<feature type="coiled-coil region" evidence="2">
    <location>
        <begin position="72"/>
        <end position="100"/>
    </location>
</feature>
<proteinExistence type="evidence at transcript level"/>
<reference key="1">
    <citation type="submission" date="2004-09" db="EMBL/GenBank/DDBJ databases">
        <title>Sequence of Xenopus tropicalis development genes.</title>
        <authorList>
            <person name="Qin S."/>
            <person name="Dors M."/>
            <person name="Johnson E."/>
            <person name="Bloom S."/>
            <person name="Hood L."/>
            <person name="Rowen L."/>
        </authorList>
    </citation>
    <scope>NUCLEOTIDE SEQUENCE [GENOMIC DNA]</scope>
</reference>
<reference key="2">
    <citation type="submission" date="2006-06" db="EMBL/GenBank/DDBJ databases">
        <authorList>
            <consortium name="Sanger Xenopus tropicalis EST/cDNA project"/>
        </authorList>
    </citation>
    <scope>NUCLEOTIDE SEQUENCE [LARGE SCALE MRNA]</scope>
    <source>
        <tissue>Gastrula</tissue>
    </source>
</reference>
<reference key="3">
    <citation type="submission" date="2004-12" db="EMBL/GenBank/DDBJ databases">
        <authorList>
            <consortium name="NIH - Xenopus Gene Collection (XGC) project"/>
        </authorList>
    </citation>
    <scope>NUCLEOTIDE SEQUENCE [LARGE SCALE MRNA] OF 5-249</scope>
    <source>
        <tissue>Embryo</tissue>
    </source>
</reference>
<comment type="function">
    <text evidence="1">Involved in pre-mRNA splicing as component of the spliceosome.</text>
</comment>
<comment type="subunit">
    <text evidence="1">Identified in the spliceosome C complex.</text>
</comment>
<comment type="subcellular location">
    <subcellularLocation>
        <location evidence="1">Nucleus</location>
    </subcellularLocation>
</comment>
<comment type="similarity">
    <text evidence="4">Belongs to the SYF2 family.</text>
</comment>
<comment type="sequence caution" evidence="4">
    <conflict type="erroneous initiation">
        <sequence resource="EMBL-CDS" id="AAU12852"/>
    </conflict>
</comment>
<protein>
    <recommendedName>
        <fullName>Pre-mRNA-splicing factor syf2</fullName>
    </recommendedName>
</protein>